<dbReference type="EC" id="2.1.1.166" evidence="1"/>
<dbReference type="EMBL" id="CP000941">
    <property type="protein sequence ID" value="ACA11117.1"/>
    <property type="molecule type" value="Genomic_DNA"/>
</dbReference>
<dbReference type="RefSeq" id="WP_004085554.1">
    <property type="nucleotide sequence ID" value="NC_010513.1"/>
</dbReference>
<dbReference type="SMR" id="B0U1F2"/>
<dbReference type="KEGG" id="xfm:Xfasm12_0075"/>
<dbReference type="HOGENOM" id="CLU_009422_4_0_6"/>
<dbReference type="GO" id="GO:0005737">
    <property type="term" value="C:cytoplasm"/>
    <property type="evidence" value="ECO:0007669"/>
    <property type="project" value="UniProtKB-SubCell"/>
</dbReference>
<dbReference type="GO" id="GO:0008650">
    <property type="term" value="F:rRNA (uridine-2'-O-)-methyltransferase activity"/>
    <property type="evidence" value="ECO:0007669"/>
    <property type="project" value="UniProtKB-UniRule"/>
</dbReference>
<dbReference type="FunFam" id="3.40.50.150:FF:000005">
    <property type="entry name" value="Ribosomal RNA large subunit methyltransferase E"/>
    <property type="match status" value="1"/>
</dbReference>
<dbReference type="Gene3D" id="3.40.50.150">
    <property type="entry name" value="Vaccinia Virus protein VP39"/>
    <property type="match status" value="1"/>
</dbReference>
<dbReference type="HAMAP" id="MF_01547">
    <property type="entry name" value="RNA_methyltr_E"/>
    <property type="match status" value="1"/>
</dbReference>
<dbReference type="InterPro" id="IPR050082">
    <property type="entry name" value="RNA_methyltr_RlmE"/>
</dbReference>
<dbReference type="InterPro" id="IPR002877">
    <property type="entry name" value="RNA_MeTrfase_FtsJ_dom"/>
</dbReference>
<dbReference type="InterPro" id="IPR015507">
    <property type="entry name" value="rRNA-MeTfrase_E"/>
</dbReference>
<dbReference type="InterPro" id="IPR029063">
    <property type="entry name" value="SAM-dependent_MTases_sf"/>
</dbReference>
<dbReference type="NCBIfam" id="NF008390">
    <property type="entry name" value="PRK11188.1"/>
    <property type="match status" value="1"/>
</dbReference>
<dbReference type="PANTHER" id="PTHR10920">
    <property type="entry name" value="RIBOSOMAL RNA METHYLTRANSFERASE"/>
    <property type="match status" value="1"/>
</dbReference>
<dbReference type="PANTHER" id="PTHR10920:SF18">
    <property type="entry name" value="RRNA METHYLTRANSFERASE 2, MITOCHONDRIAL"/>
    <property type="match status" value="1"/>
</dbReference>
<dbReference type="Pfam" id="PF01728">
    <property type="entry name" value="FtsJ"/>
    <property type="match status" value="1"/>
</dbReference>
<dbReference type="PIRSF" id="PIRSF005461">
    <property type="entry name" value="23S_rRNA_mtase"/>
    <property type="match status" value="1"/>
</dbReference>
<dbReference type="SUPFAM" id="SSF53335">
    <property type="entry name" value="S-adenosyl-L-methionine-dependent methyltransferases"/>
    <property type="match status" value="1"/>
</dbReference>
<evidence type="ECO:0000255" key="1">
    <source>
        <dbReference type="HAMAP-Rule" id="MF_01547"/>
    </source>
</evidence>
<sequence>MSHSKSSQRWLKEHFSDPFVKKAQAEGMRSRAAYKLEEILKRDRILRPNMVVIDLGAAPGGWSQQIRKQMGDRGRVIALDIVKMAPLVGIEFLQGDFRDKAVLSQLEIMLKGQPVDLVLSDMAPNKSGMDAMDQPRMMYLAELAMDFADIHVKPGGSFLIKLFHGVGSDDYIRQLRHRYKKVAIRKPLASRKRSPEVYILGDGKLTQNEVSCS</sequence>
<accession>B0U1F2</accession>
<gene>
    <name evidence="1" type="primary">rlmE</name>
    <name evidence="1" type="synonym">ftsJ</name>
    <name evidence="1" type="synonym">rrmJ</name>
    <name type="ordered locus">Xfasm12_0075</name>
</gene>
<protein>
    <recommendedName>
        <fullName evidence="1">Ribosomal RNA large subunit methyltransferase E</fullName>
        <ecNumber evidence="1">2.1.1.166</ecNumber>
    </recommendedName>
    <alternativeName>
        <fullName evidence="1">23S rRNA Um2552 methyltransferase</fullName>
    </alternativeName>
    <alternativeName>
        <fullName evidence="1">rRNA (uridine-2'-O-)-methyltransferase</fullName>
    </alternativeName>
</protein>
<organism>
    <name type="scientific">Xylella fastidiosa (strain M12)</name>
    <dbReference type="NCBI Taxonomy" id="405440"/>
    <lineage>
        <taxon>Bacteria</taxon>
        <taxon>Pseudomonadati</taxon>
        <taxon>Pseudomonadota</taxon>
        <taxon>Gammaproteobacteria</taxon>
        <taxon>Lysobacterales</taxon>
        <taxon>Lysobacteraceae</taxon>
        <taxon>Xylella</taxon>
    </lineage>
</organism>
<comment type="function">
    <text evidence="1">Specifically methylates the uridine in position 2552 of 23S rRNA at the 2'-O position of the ribose in the fully assembled 50S ribosomal subunit.</text>
</comment>
<comment type="catalytic activity">
    <reaction evidence="1">
        <text>uridine(2552) in 23S rRNA + S-adenosyl-L-methionine = 2'-O-methyluridine(2552) in 23S rRNA + S-adenosyl-L-homocysteine + H(+)</text>
        <dbReference type="Rhea" id="RHEA:42720"/>
        <dbReference type="Rhea" id="RHEA-COMP:10202"/>
        <dbReference type="Rhea" id="RHEA-COMP:10203"/>
        <dbReference type="ChEBI" id="CHEBI:15378"/>
        <dbReference type="ChEBI" id="CHEBI:57856"/>
        <dbReference type="ChEBI" id="CHEBI:59789"/>
        <dbReference type="ChEBI" id="CHEBI:65315"/>
        <dbReference type="ChEBI" id="CHEBI:74478"/>
        <dbReference type="EC" id="2.1.1.166"/>
    </reaction>
</comment>
<comment type="subcellular location">
    <subcellularLocation>
        <location evidence="1">Cytoplasm</location>
    </subcellularLocation>
</comment>
<comment type="similarity">
    <text evidence="1">Belongs to the class I-like SAM-binding methyltransferase superfamily. RNA methyltransferase RlmE family.</text>
</comment>
<name>RLME_XYLFM</name>
<keyword id="KW-0963">Cytoplasm</keyword>
<keyword id="KW-0489">Methyltransferase</keyword>
<keyword id="KW-0698">rRNA processing</keyword>
<keyword id="KW-0949">S-adenosyl-L-methionine</keyword>
<keyword id="KW-0808">Transferase</keyword>
<reference key="1">
    <citation type="journal article" date="2010" name="J. Bacteriol.">
        <title>Whole genome sequences of two Xylella fastidiosa strains (M12 and M23) causing almond leaf scorch disease in California.</title>
        <authorList>
            <person name="Chen J."/>
            <person name="Xie G."/>
            <person name="Han S."/>
            <person name="Chertkov O."/>
            <person name="Sims D."/>
            <person name="Civerolo E.L."/>
        </authorList>
    </citation>
    <scope>NUCLEOTIDE SEQUENCE [LARGE SCALE GENOMIC DNA]</scope>
    <source>
        <strain>M12</strain>
    </source>
</reference>
<feature type="chain" id="PRO_1000195030" description="Ribosomal RNA large subunit methyltransferase E">
    <location>
        <begin position="1"/>
        <end position="213"/>
    </location>
</feature>
<feature type="active site" description="Proton acceptor" evidence="1">
    <location>
        <position position="161"/>
    </location>
</feature>
<feature type="binding site" evidence="1">
    <location>
        <position position="60"/>
    </location>
    <ligand>
        <name>S-adenosyl-L-methionine</name>
        <dbReference type="ChEBI" id="CHEBI:59789"/>
    </ligand>
</feature>
<feature type="binding site" evidence="1">
    <location>
        <position position="62"/>
    </location>
    <ligand>
        <name>S-adenosyl-L-methionine</name>
        <dbReference type="ChEBI" id="CHEBI:59789"/>
    </ligand>
</feature>
<feature type="binding site" evidence="1">
    <location>
        <position position="80"/>
    </location>
    <ligand>
        <name>S-adenosyl-L-methionine</name>
        <dbReference type="ChEBI" id="CHEBI:59789"/>
    </ligand>
</feature>
<feature type="binding site" evidence="1">
    <location>
        <position position="96"/>
    </location>
    <ligand>
        <name>S-adenosyl-L-methionine</name>
        <dbReference type="ChEBI" id="CHEBI:59789"/>
    </ligand>
</feature>
<feature type="binding site" evidence="1">
    <location>
        <position position="121"/>
    </location>
    <ligand>
        <name>S-adenosyl-L-methionine</name>
        <dbReference type="ChEBI" id="CHEBI:59789"/>
    </ligand>
</feature>
<proteinExistence type="inferred from homology"/>